<dbReference type="EMBL" id="CP000116">
    <property type="protein sequence ID" value="AAZ98329.1"/>
    <property type="molecule type" value="Genomic_DNA"/>
</dbReference>
<dbReference type="RefSeq" id="WP_011312888.1">
    <property type="nucleotide sequence ID" value="NC_007404.1"/>
</dbReference>
<dbReference type="SMR" id="Q3SGC1"/>
<dbReference type="STRING" id="292415.Tbd_2376"/>
<dbReference type="KEGG" id="tbd:Tbd_2376"/>
<dbReference type="eggNOG" id="COG0335">
    <property type="taxonomic scope" value="Bacteria"/>
</dbReference>
<dbReference type="HOGENOM" id="CLU_103507_1_0_4"/>
<dbReference type="OrthoDB" id="9803541at2"/>
<dbReference type="Proteomes" id="UP000008291">
    <property type="component" value="Chromosome"/>
</dbReference>
<dbReference type="GO" id="GO:0022625">
    <property type="term" value="C:cytosolic large ribosomal subunit"/>
    <property type="evidence" value="ECO:0007669"/>
    <property type="project" value="TreeGrafter"/>
</dbReference>
<dbReference type="GO" id="GO:0003735">
    <property type="term" value="F:structural constituent of ribosome"/>
    <property type="evidence" value="ECO:0007669"/>
    <property type="project" value="InterPro"/>
</dbReference>
<dbReference type="GO" id="GO:0006412">
    <property type="term" value="P:translation"/>
    <property type="evidence" value="ECO:0007669"/>
    <property type="project" value="UniProtKB-UniRule"/>
</dbReference>
<dbReference type="FunFam" id="2.30.30.790:FF:000001">
    <property type="entry name" value="50S ribosomal protein L19"/>
    <property type="match status" value="1"/>
</dbReference>
<dbReference type="Gene3D" id="2.30.30.790">
    <property type="match status" value="1"/>
</dbReference>
<dbReference type="HAMAP" id="MF_00402">
    <property type="entry name" value="Ribosomal_bL19"/>
    <property type="match status" value="1"/>
</dbReference>
<dbReference type="InterPro" id="IPR001857">
    <property type="entry name" value="Ribosomal_bL19"/>
</dbReference>
<dbReference type="InterPro" id="IPR018257">
    <property type="entry name" value="Ribosomal_bL19_CS"/>
</dbReference>
<dbReference type="InterPro" id="IPR038657">
    <property type="entry name" value="Ribosomal_bL19_sf"/>
</dbReference>
<dbReference type="InterPro" id="IPR008991">
    <property type="entry name" value="Translation_prot_SH3-like_sf"/>
</dbReference>
<dbReference type="NCBIfam" id="TIGR01024">
    <property type="entry name" value="rplS_bact"/>
    <property type="match status" value="1"/>
</dbReference>
<dbReference type="PANTHER" id="PTHR15680:SF9">
    <property type="entry name" value="LARGE RIBOSOMAL SUBUNIT PROTEIN BL19M"/>
    <property type="match status" value="1"/>
</dbReference>
<dbReference type="PANTHER" id="PTHR15680">
    <property type="entry name" value="RIBOSOMAL PROTEIN L19"/>
    <property type="match status" value="1"/>
</dbReference>
<dbReference type="Pfam" id="PF01245">
    <property type="entry name" value="Ribosomal_L19"/>
    <property type="match status" value="1"/>
</dbReference>
<dbReference type="PIRSF" id="PIRSF002191">
    <property type="entry name" value="Ribosomal_L19"/>
    <property type="match status" value="1"/>
</dbReference>
<dbReference type="PRINTS" id="PR00061">
    <property type="entry name" value="RIBOSOMALL19"/>
</dbReference>
<dbReference type="SUPFAM" id="SSF50104">
    <property type="entry name" value="Translation proteins SH3-like domain"/>
    <property type="match status" value="1"/>
</dbReference>
<dbReference type="PROSITE" id="PS01015">
    <property type="entry name" value="RIBOSOMAL_L19"/>
    <property type="match status" value="1"/>
</dbReference>
<proteinExistence type="inferred from homology"/>
<reference key="1">
    <citation type="journal article" date="2006" name="J. Bacteriol.">
        <title>The genome sequence of the obligately chemolithoautotrophic, facultatively anaerobic bacterium Thiobacillus denitrificans.</title>
        <authorList>
            <person name="Beller H.R."/>
            <person name="Chain P.S."/>
            <person name="Letain T.E."/>
            <person name="Chakicherla A."/>
            <person name="Larimer F.W."/>
            <person name="Richardson P.M."/>
            <person name="Coleman M.A."/>
            <person name="Wood A.P."/>
            <person name="Kelly D.P."/>
        </authorList>
    </citation>
    <scope>NUCLEOTIDE SEQUENCE [LARGE SCALE GENOMIC DNA]</scope>
    <source>
        <strain>ATCC 25259 / T1</strain>
    </source>
</reference>
<accession>Q3SGC1</accession>
<keyword id="KW-1185">Reference proteome</keyword>
<keyword id="KW-0687">Ribonucleoprotein</keyword>
<keyword id="KW-0689">Ribosomal protein</keyword>
<protein>
    <recommendedName>
        <fullName evidence="1">Large ribosomal subunit protein bL19</fullName>
    </recommendedName>
    <alternativeName>
        <fullName evidence="2">50S ribosomal protein L19</fullName>
    </alternativeName>
</protein>
<name>RL19_THIDA</name>
<organism>
    <name type="scientific">Thiobacillus denitrificans (strain ATCC 25259 / T1)</name>
    <dbReference type="NCBI Taxonomy" id="292415"/>
    <lineage>
        <taxon>Bacteria</taxon>
        <taxon>Pseudomonadati</taxon>
        <taxon>Pseudomonadota</taxon>
        <taxon>Betaproteobacteria</taxon>
        <taxon>Nitrosomonadales</taxon>
        <taxon>Thiobacillaceae</taxon>
        <taxon>Thiobacillus</taxon>
    </lineage>
</organism>
<feature type="chain" id="PRO_0000226880" description="Large ribosomal subunit protein bL19">
    <location>
        <begin position="1"/>
        <end position="126"/>
    </location>
</feature>
<comment type="function">
    <text evidence="1">This protein is located at the 30S-50S ribosomal subunit interface and may play a role in the structure and function of the aminoacyl-tRNA binding site.</text>
</comment>
<comment type="similarity">
    <text evidence="1">Belongs to the bacterial ribosomal protein bL19 family.</text>
</comment>
<gene>
    <name evidence="1" type="primary">rplS</name>
    <name type="ordered locus">Tbd_2376</name>
</gene>
<evidence type="ECO:0000255" key="1">
    <source>
        <dbReference type="HAMAP-Rule" id="MF_00402"/>
    </source>
</evidence>
<evidence type="ECO:0000305" key="2"/>
<sequence>MNIIEQLEQEEIARLGKTVPDFAPGDTVVVQVKVKEGNRERLQAYEGVVIAKRNRGLNSAFTVRKISAGEGVERTFQTYSPLVASVEVKRRGDVRRAKLYYLRERSGKSARIKEKLPARKASVAAE</sequence>